<sequence length="263" mass="28959">MRLGLCVVALVLSWTHLTISSRGIKGKRQRRISAEGSQACAKGCELCSEVNGCLKCSPKLFILLERNDIRQVGVCLPSCPPGYFDARNPDMNKCIKCKIEHCEACFSHNFCTKCKEGLYLHKGRCYPACPEGSSAANGTMECSSPAQCEMSEWSPWGPCSKKQQLCGFRRGSEERTRRVLHAPVGDHAACSDTKETRRCTVRRVPCPEGQKRRKGGQGRRENANRNLARKESKEAGAGSRRRKGQQQQQQQGTVGPLTSAGPA</sequence>
<keyword id="KW-0002">3D-structure</keyword>
<keyword id="KW-0025">Alternative splicing</keyword>
<keyword id="KW-1015">Disulfide bond</keyword>
<keyword id="KW-0325">Glycoprotein</keyword>
<keyword id="KW-0358">Heparin-binding</keyword>
<keyword id="KW-0539">Nucleus</keyword>
<keyword id="KW-1007">Palmoplantar keratoderma</keyword>
<keyword id="KW-1267">Proteomics identification</keyword>
<keyword id="KW-1185">Reference proteome</keyword>
<keyword id="KW-0677">Repeat</keyword>
<keyword id="KW-0964">Secreted</keyword>
<keyword id="KW-0716">Sensory transduction</keyword>
<keyword id="KW-0732">Signal</keyword>
<keyword id="KW-0879">Wnt signaling pathway</keyword>
<organism>
    <name type="scientific">Homo sapiens</name>
    <name type="common">Human</name>
    <dbReference type="NCBI Taxonomy" id="9606"/>
    <lineage>
        <taxon>Eukaryota</taxon>
        <taxon>Metazoa</taxon>
        <taxon>Chordata</taxon>
        <taxon>Craniata</taxon>
        <taxon>Vertebrata</taxon>
        <taxon>Euteleostomi</taxon>
        <taxon>Mammalia</taxon>
        <taxon>Eutheria</taxon>
        <taxon>Euarchontoglires</taxon>
        <taxon>Primates</taxon>
        <taxon>Haplorrhini</taxon>
        <taxon>Catarrhini</taxon>
        <taxon>Hominidae</taxon>
        <taxon>Homo</taxon>
    </lineage>
</organism>
<accession>Q2MKA7</accession>
<accession>A2A420</accession>
<accession>Q0H8S6</accession>
<accession>Q14C72</accession>
<accession>Q5T0F2</accession>
<accession>Q8N7L5</accession>
<comment type="function">
    <text evidence="6 8 9 10 11 12 13 15 16 19">Activator of the canonical Wnt signaling pathway by acting as a ligand for LGR4-6 receptors (PubMed:29769720). Upon binding to LGR4-6 (LGR4, LGR5 or LGR6), LGR4-6 associate with phosphorylated LRP6 and frizzled receptors that are activated by extracellular Wnt receptors, triggering the canonical Wnt signaling pathway to increase expression of target genes. Also regulates the canonical Wnt/beta-catenin-dependent pathway and non-canonical Wnt signaling by acting as an inhibitor of ZNRF3, an important regulator of the Wnt signaling pathway. Acts as a ligand for frizzled FZD8 and LRP6. May negatively regulate the TGF-beta pathway. Has a essential roles in ovary determination. Regulates Wnt signaling by antagonizing DKK1/KREM1-mediated internalization of LRP6 through an interaction with KREM1 (PubMed:17804805).</text>
</comment>
<comment type="subunit">
    <text evidence="2 8 9 10 11 12 13 14 15 16">Interacts with the extracellular domain of FZD8 and LRP6. It however does not form a ternary complex with FZD8 and LRP6. Interacts with WNT1. Binds heparin (By similarity). Interacts with ZNRF3; promoting indirect interaction between ZNRF3 and LGR4 and membrane clearance of ZNRF3. Interacts with LGR4, LGR5 and LGR6. Identified in a complex composed of RNF43, LGR5 and RSPO1. Interacts (via FU repeats) with KREM1 (PubMed:17804805).</text>
</comment>
<comment type="interaction">
    <interactant intactId="EBI-10045219">
        <id>Q2MKA7</id>
    </interactant>
    <interactant intactId="EBI-10200977">
        <id>P21964-2</id>
        <label>COMT</label>
    </interactant>
    <organismsDiffer>false</organismsDiffer>
    <experiments>3</experiments>
</comment>
<comment type="interaction">
    <interactant intactId="EBI-10045219">
        <id>Q2MKA7</id>
    </interactant>
    <interactant intactId="EBI-4402067">
        <id>O75473</id>
        <label>LGR5</label>
    </interactant>
    <organismsDiffer>false</organismsDiffer>
    <experiments>3</experiments>
</comment>
<comment type="interaction">
    <interactant intactId="EBI-10045219">
        <id>Q2MKA7</id>
    </interactant>
    <interactant intactId="EBI-949772">
        <id>Q9ULT6</id>
        <label>ZNRF3</label>
    </interactant>
    <organismsDiffer>false</organismsDiffer>
    <experiments>6</experiments>
</comment>
<comment type="interaction">
    <interactant intactId="EBI-10045219">
        <id>Q2MKA7</id>
    </interactant>
    <interactant intactId="EBI-7425077">
        <id>B0BLW3</id>
        <label>lgr4</label>
    </interactant>
    <organismsDiffer>true</organismsDiffer>
    <experiments>2</experiments>
</comment>
<comment type="interaction">
    <interactant intactId="EBI-10045219">
        <id>Q2MKA7</id>
    </interactant>
    <interactant intactId="EBI-21993315">
        <id>Q5SSZ7</id>
        <label>Znrf3</label>
    </interactant>
    <organismsDiffer>true</organismsDiffer>
    <experiments>3</experiments>
</comment>
<comment type="subcellular location">
    <subcellularLocation>
        <location evidence="17 18">Secreted</location>
    </subcellularLocation>
    <subcellularLocation>
        <location evidence="2">Nucleus</location>
    </subcellularLocation>
    <text evidence="2">Seems to mainly localize to nucleoli.</text>
</comment>
<comment type="alternative products">
    <event type="alternative splicing"/>
    <isoform>
        <id>Q2MKA7-1</id>
        <name>1</name>
        <sequence type="displayed"/>
    </isoform>
    <isoform>
        <id>Q2MKA7-2</id>
        <name>2</name>
        <sequence type="described" ref="VSP_018320"/>
    </isoform>
    <isoform>
        <id>Q2MKA7-3</id>
        <name>3</name>
        <sequence type="described" ref="VSP_043265"/>
    </isoform>
</comment>
<comment type="tissue specificity">
    <text evidence="7">Abundantly expressed in adrenal glands, ovary, testis, thyroid and trachea but not in bone marrow, spinal cord, stomach, leukocytes colon, small intestine, prostate, thymus and spleen.</text>
</comment>
<comment type="domain">
    <text evidence="1">The FU repeats are required for activation and stabilization of beta-catenin.</text>
</comment>
<comment type="PTM">
    <text evidence="17 18">C-, and N-glycosylated. N-glycosylation at Asn-137, negatively influences its secretion and enhancing effect on Wnt/beta-catenin signaling (PubMed:27123103). C-mannosylation at Trp-156 by DPY19L3 is required for its secretion and regulates the enhancing activity of Wnt signaling (PubMed:26764097).</text>
</comment>
<comment type="disease" evidence="7">
    <disease id="DI-00899">
        <name>Keratoderma, palmoplantar, with squamous cell carcinoma of skin and sex reversal</name>
        <acronym>PKKSCC</acronym>
        <description>A recessive syndrome characterized by XX (female to male) SRY-independent sex reversal, palmoplantar hyperkeratosis and predisposition to squamous cell carcinoma of the skin.</description>
        <dbReference type="MIM" id="610644"/>
    </disease>
    <text>The disease is caused by variants affecting the gene represented in this entry.</text>
</comment>
<comment type="miscellaneous">
    <text>Upon injection into mice, it induces rapid onset of crypt cell proliferation involving beta-catenin stabilization. It also displays efficacy in a model of chemotherapy-induced intestinal mucositis suggesting possible therapeutic application in gastrointestinal diseases.</text>
</comment>
<comment type="similarity">
    <text evidence="22">Belongs to the R-spondin family.</text>
</comment>
<comment type="online information" name="Atlas of Genetics and Cytogenetics in Oncology and Haematology">
    <link uri="https://atlasgeneticsoncology.org/gene/44137/RSPO1"/>
</comment>
<dbReference type="EMBL" id="DQ318235">
    <property type="protein sequence ID" value="ABC54570.1"/>
    <property type="molecule type" value="mRNA"/>
</dbReference>
<dbReference type="EMBL" id="DQ165084">
    <property type="protein sequence ID" value="ABA54597.1"/>
    <property type="molecule type" value="mRNA"/>
</dbReference>
<dbReference type="EMBL" id="DQ165085">
    <property type="protein sequence ID" value="ABA54598.1"/>
    <property type="molecule type" value="mRNA"/>
</dbReference>
<dbReference type="EMBL" id="AK098225">
    <property type="protein sequence ID" value="BAC05263.1"/>
    <property type="molecule type" value="mRNA"/>
</dbReference>
<dbReference type="EMBL" id="AL513220">
    <property type="status" value="NOT_ANNOTATED_CDS"/>
    <property type="molecule type" value="Genomic_DNA"/>
</dbReference>
<dbReference type="EMBL" id="BC114966">
    <property type="protein sequence ID" value="AAI14967.1"/>
    <property type="molecule type" value="mRNA"/>
</dbReference>
<dbReference type="CCDS" id="CCDS41304.1">
    <molecule id="Q2MKA7-1"/>
</dbReference>
<dbReference type="CCDS" id="CCDS55590.1">
    <molecule id="Q2MKA7-3"/>
</dbReference>
<dbReference type="CCDS" id="CCDS55591.1">
    <molecule id="Q2MKA7-2"/>
</dbReference>
<dbReference type="RefSeq" id="NP_001033722.1">
    <molecule id="Q2MKA7-1"/>
    <property type="nucleotide sequence ID" value="NM_001038633.4"/>
</dbReference>
<dbReference type="RefSeq" id="NP_001229837.1">
    <molecule id="Q2MKA7-1"/>
    <property type="nucleotide sequence ID" value="NM_001242908.2"/>
</dbReference>
<dbReference type="RefSeq" id="NP_001229838.1">
    <molecule id="Q2MKA7-2"/>
    <property type="nucleotide sequence ID" value="NM_001242909.2"/>
</dbReference>
<dbReference type="RefSeq" id="NP_001229839.1">
    <molecule id="Q2MKA7-3"/>
    <property type="nucleotide sequence ID" value="NM_001242910.2"/>
</dbReference>
<dbReference type="RefSeq" id="XP_006710646.1">
    <molecule id="Q2MKA7-1"/>
    <property type="nucleotide sequence ID" value="XM_006710583.5"/>
</dbReference>
<dbReference type="RefSeq" id="XP_054192109.1">
    <molecule id="Q2MKA7-1"/>
    <property type="nucleotide sequence ID" value="XM_054336134.1"/>
</dbReference>
<dbReference type="PDB" id="4BSO">
    <property type="method" value="X-ray"/>
    <property type="resolution" value="2.20 A"/>
    <property type="chains" value="A=31-146"/>
</dbReference>
<dbReference type="PDB" id="4BSP">
    <property type="method" value="X-ray"/>
    <property type="resolution" value="2.00 A"/>
    <property type="chains" value="A=31-146"/>
</dbReference>
<dbReference type="PDB" id="4BSR">
    <property type="method" value="X-ray"/>
    <property type="resolution" value="3.20 A"/>
    <property type="chains" value="C/D=31-146"/>
</dbReference>
<dbReference type="PDB" id="4BSS">
    <property type="method" value="X-ray"/>
    <property type="resolution" value="3.20 A"/>
    <property type="chains" value="C/D/G/H=31-146"/>
</dbReference>
<dbReference type="PDB" id="4BST">
    <property type="method" value="X-ray"/>
    <property type="resolution" value="4.30 A"/>
    <property type="chains" value="C/D=31-146"/>
</dbReference>
<dbReference type="PDB" id="4BSU">
    <property type="method" value="X-ray"/>
    <property type="resolution" value="3.20 A"/>
    <property type="chains" value="C/D/G/H=31-146"/>
</dbReference>
<dbReference type="PDB" id="4CDK">
    <property type="method" value="X-ray"/>
    <property type="resolution" value="2.80 A"/>
    <property type="chains" value="E/F/G/H=31-145"/>
</dbReference>
<dbReference type="PDB" id="4KNG">
    <property type="method" value="X-ray"/>
    <property type="resolution" value="2.50 A"/>
    <property type="chains" value="M/P=35-144"/>
</dbReference>
<dbReference type="PDB" id="4KT1">
    <property type="method" value="X-ray"/>
    <property type="resolution" value="2.50 A"/>
    <property type="chains" value="E=39-128"/>
</dbReference>
<dbReference type="PDB" id="4LI2">
    <property type="method" value="X-ray"/>
    <property type="resolution" value="3.19 A"/>
    <property type="chains" value="B=33-144"/>
</dbReference>
<dbReference type="PDB" id="4QXF">
    <property type="method" value="X-ray"/>
    <property type="resolution" value="2.25 A"/>
    <property type="chains" value="C/E=34-135"/>
</dbReference>
<dbReference type="PDB" id="8WVU">
    <property type="method" value="EM"/>
    <property type="resolution" value="3.61 A"/>
    <property type="chains" value="B=35-144"/>
</dbReference>
<dbReference type="PDBsum" id="4BSO"/>
<dbReference type="PDBsum" id="4BSP"/>
<dbReference type="PDBsum" id="4BSR"/>
<dbReference type="PDBsum" id="4BSS"/>
<dbReference type="PDBsum" id="4BST"/>
<dbReference type="PDBsum" id="4BSU"/>
<dbReference type="PDBsum" id="4CDK"/>
<dbReference type="PDBsum" id="4KNG"/>
<dbReference type="PDBsum" id="4KT1"/>
<dbReference type="PDBsum" id="4LI2"/>
<dbReference type="PDBsum" id="4QXF"/>
<dbReference type="PDBsum" id="8WVU"/>
<dbReference type="EMDB" id="EMD-37869"/>
<dbReference type="SMR" id="Q2MKA7"/>
<dbReference type="BioGRID" id="129926">
    <property type="interactions" value="15"/>
</dbReference>
<dbReference type="CORUM" id="Q2MKA7"/>
<dbReference type="DIP" id="DIP-59895N"/>
<dbReference type="FunCoup" id="Q2MKA7">
    <property type="interactions" value="384"/>
</dbReference>
<dbReference type="IntAct" id="Q2MKA7">
    <property type="interactions" value="14"/>
</dbReference>
<dbReference type="MINT" id="Q2MKA7"/>
<dbReference type="STRING" id="9606.ENSP00000348944"/>
<dbReference type="GlyCosmos" id="Q2MKA7">
    <property type="glycosylation" value="1 site, No reported glycans"/>
</dbReference>
<dbReference type="GlyGen" id="Q2MKA7">
    <property type="glycosylation" value="3 sites"/>
</dbReference>
<dbReference type="iPTMnet" id="Q2MKA7"/>
<dbReference type="PhosphoSitePlus" id="Q2MKA7"/>
<dbReference type="BioMuta" id="RSPO1"/>
<dbReference type="DMDM" id="97189599"/>
<dbReference type="MassIVE" id="Q2MKA7"/>
<dbReference type="PaxDb" id="9606-ENSP00000348944"/>
<dbReference type="PeptideAtlas" id="Q2MKA7"/>
<dbReference type="ProteomicsDB" id="61396">
    <molecule id="Q2MKA7-1"/>
</dbReference>
<dbReference type="ProteomicsDB" id="61398">
    <molecule id="Q2MKA7-3"/>
</dbReference>
<dbReference type="Antibodypedia" id="31749">
    <property type="antibodies" value="300 antibodies from 34 providers"/>
</dbReference>
<dbReference type="DNASU" id="284654"/>
<dbReference type="Ensembl" id="ENST00000356545.7">
    <molecule id="Q2MKA7-1"/>
    <property type="protein sequence ID" value="ENSP00000348944.2"/>
    <property type="gene ID" value="ENSG00000169218.14"/>
</dbReference>
<dbReference type="Ensembl" id="ENST00000401068.1">
    <molecule id="Q2MKA7-1"/>
    <property type="protein sequence ID" value="ENSP00000383846.1"/>
    <property type="gene ID" value="ENSG00000169218.14"/>
</dbReference>
<dbReference type="Ensembl" id="ENST00000612451.4">
    <molecule id="Q2MKA7-3"/>
    <property type="protein sequence ID" value="ENSP00000479832.1"/>
    <property type="gene ID" value="ENSG00000169218.14"/>
</dbReference>
<dbReference type="Ensembl" id="ENST00000615459.4">
    <molecule id="Q2MKA7-2"/>
    <property type="protein sequence ID" value="ENSP00000481178.1"/>
    <property type="gene ID" value="ENSG00000169218.14"/>
</dbReference>
<dbReference type="GeneID" id="284654"/>
<dbReference type="KEGG" id="hsa:284654"/>
<dbReference type="MANE-Select" id="ENST00000356545.7">
    <property type="protein sequence ID" value="ENSP00000348944.2"/>
    <property type="RefSeq nucleotide sequence ID" value="NM_001242908.2"/>
    <property type="RefSeq protein sequence ID" value="NP_001229837.1"/>
</dbReference>
<dbReference type="UCSC" id="uc031txm.2">
    <molecule id="Q2MKA7-1"/>
    <property type="organism name" value="human"/>
</dbReference>
<dbReference type="AGR" id="HGNC:21679"/>
<dbReference type="CTD" id="284654"/>
<dbReference type="DisGeNET" id="284654"/>
<dbReference type="GeneCards" id="RSPO1"/>
<dbReference type="HGNC" id="HGNC:21679">
    <property type="gene designation" value="RSPO1"/>
</dbReference>
<dbReference type="HPA" id="ENSG00000169218">
    <property type="expression patterns" value="Tissue enhanced (cervix, endometrium)"/>
</dbReference>
<dbReference type="MalaCards" id="RSPO1"/>
<dbReference type="MIM" id="609595">
    <property type="type" value="gene"/>
</dbReference>
<dbReference type="MIM" id="610644">
    <property type="type" value="phenotype"/>
</dbReference>
<dbReference type="neXtProt" id="NX_Q2MKA7"/>
<dbReference type="OpenTargets" id="ENSG00000169218"/>
<dbReference type="Orphanet" id="85112">
    <property type="disease" value="Palmoplantar keratoderma-XX sex reversal-predisposition to squamous cell carcinoma syndrome"/>
</dbReference>
<dbReference type="PharmGKB" id="PA142670967"/>
<dbReference type="VEuPathDB" id="HostDB:ENSG00000169218"/>
<dbReference type="eggNOG" id="KOG3525">
    <property type="taxonomic scope" value="Eukaryota"/>
</dbReference>
<dbReference type="GeneTree" id="ENSGT00940000158871"/>
<dbReference type="HOGENOM" id="CLU_064219_0_1_1"/>
<dbReference type="InParanoid" id="Q2MKA7"/>
<dbReference type="OMA" id="XCKIEHC"/>
<dbReference type="OrthoDB" id="10257656at2759"/>
<dbReference type="PAN-GO" id="Q2MKA7">
    <property type="GO annotations" value="0 GO annotations based on evolutionary models"/>
</dbReference>
<dbReference type="PhylomeDB" id="Q2MKA7"/>
<dbReference type="TreeFam" id="TF331799"/>
<dbReference type="PathwayCommons" id="Q2MKA7"/>
<dbReference type="Reactome" id="R-HSA-4641263">
    <property type="pathway name" value="Regulation of FZD by ubiquitination"/>
</dbReference>
<dbReference type="SignaLink" id="Q2MKA7"/>
<dbReference type="SIGNOR" id="Q2MKA7"/>
<dbReference type="BioGRID-ORCS" id="284654">
    <property type="hits" value="11 hits in 1149 CRISPR screens"/>
</dbReference>
<dbReference type="ChiTaRS" id="RSPO1">
    <property type="organism name" value="human"/>
</dbReference>
<dbReference type="EvolutionaryTrace" id="Q2MKA7"/>
<dbReference type="GeneWiki" id="RSPO1"/>
<dbReference type="GenomeRNAi" id="284654"/>
<dbReference type="Pharos" id="Q2MKA7">
    <property type="development level" value="Tbio"/>
</dbReference>
<dbReference type="PRO" id="PR:Q2MKA7"/>
<dbReference type="Proteomes" id="UP000005640">
    <property type="component" value="Chromosome 1"/>
</dbReference>
<dbReference type="RNAct" id="Q2MKA7">
    <property type="molecule type" value="protein"/>
</dbReference>
<dbReference type="Bgee" id="ENSG00000169218">
    <property type="expression patterns" value="Expressed in endocervix and 88 other cell types or tissues"/>
</dbReference>
<dbReference type="GO" id="GO:0005576">
    <property type="term" value="C:extracellular region"/>
    <property type="evidence" value="ECO:0000304"/>
    <property type="project" value="Reactome"/>
</dbReference>
<dbReference type="GO" id="GO:0005615">
    <property type="term" value="C:extracellular space"/>
    <property type="evidence" value="ECO:0000318"/>
    <property type="project" value="GO_Central"/>
</dbReference>
<dbReference type="GO" id="GO:0005634">
    <property type="term" value="C:nucleus"/>
    <property type="evidence" value="ECO:0007669"/>
    <property type="project" value="UniProtKB-SubCell"/>
</dbReference>
<dbReference type="GO" id="GO:0001664">
    <property type="term" value="F:G protein-coupled receptor binding"/>
    <property type="evidence" value="ECO:0000353"/>
    <property type="project" value="UniProtKB"/>
</dbReference>
<dbReference type="GO" id="GO:0008201">
    <property type="term" value="F:heparin binding"/>
    <property type="evidence" value="ECO:0007669"/>
    <property type="project" value="UniProtKB-KW"/>
</dbReference>
<dbReference type="GO" id="GO:0005102">
    <property type="term" value="F:signaling receptor binding"/>
    <property type="evidence" value="ECO:0000353"/>
    <property type="project" value="UniProtKB"/>
</dbReference>
<dbReference type="GO" id="GO:0090263">
    <property type="term" value="P:positive regulation of canonical Wnt signaling pathway"/>
    <property type="evidence" value="ECO:0000314"/>
    <property type="project" value="UniProtKB"/>
</dbReference>
<dbReference type="GO" id="GO:0001934">
    <property type="term" value="P:positive regulation of protein phosphorylation"/>
    <property type="evidence" value="ECO:0000314"/>
    <property type="project" value="UniProtKB"/>
</dbReference>
<dbReference type="GO" id="GO:0030177">
    <property type="term" value="P:positive regulation of Wnt signaling pathway"/>
    <property type="evidence" value="ECO:0000314"/>
    <property type="project" value="UniProtKB"/>
</dbReference>
<dbReference type="GO" id="GO:0002090">
    <property type="term" value="P:regulation of receptor internalization"/>
    <property type="evidence" value="ECO:0000314"/>
    <property type="project" value="BHF-UCL"/>
</dbReference>
<dbReference type="GO" id="GO:0016055">
    <property type="term" value="P:Wnt signaling pathway"/>
    <property type="evidence" value="ECO:0007669"/>
    <property type="project" value="UniProtKB-KW"/>
</dbReference>
<dbReference type="CDD" id="cd00064">
    <property type="entry name" value="FU"/>
    <property type="match status" value="1"/>
</dbReference>
<dbReference type="FunFam" id="2.20.100.10:FF:000056">
    <property type="entry name" value="R-spondin 1"/>
    <property type="match status" value="1"/>
</dbReference>
<dbReference type="FunFam" id="2.10.220.10:FF:000003">
    <property type="entry name" value="R-spondin 3"/>
    <property type="match status" value="1"/>
</dbReference>
<dbReference type="Gene3D" id="2.10.220.10">
    <property type="entry name" value="Hormone Receptor, Insulin-like Growth Factor Receptor 1, Chain A, domain 2"/>
    <property type="match status" value="1"/>
</dbReference>
<dbReference type="Gene3D" id="2.20.100.10">
    <property type="entry name" value="Thrombospondin type-1 (TSP1) repeat"/>
    <property type="match status" value="1"/>
</dbReference>
<dbReference type="InterPro" id="IPR006212">
    <property type="entry name" value="Furin_repeat"/>
</dbReference>
<dbReference type="InterPro" id="IPR009030">
    <property type="entry name" value="Growth_fac_rcpt_cys_sf"/>
</dbReference>
<dbReference type="InterPro" id="IPR051514">
    <property type="entry name" value="R-spondin"/>
</dbReference>
<dbReference type="InterPro" id="IPR043601">
    <property type="entry name" value="Rspo_Fu-CRD_dom"/>
</dbReference>
<dbReference type="InterPro" id="IPR000884">
    <property type="entry name" value="TSP1_rpt"/>
</dbReference>
<dbReference type="InterPro" id="IPR036383">
    <property type="entry name" value="TSP1_rpt_sf"/>
</dbReference>
<dbReference type="PANTHER" id="PTHR46987">
    <property type="entry name" value="NEUROHYPOPHYSIAL HORMONES, N-TERMINAL DOMAIN CONTAINING PROTEIN"/>
    <property type="match status" value="1"/>
</dbReference>
<dbReference type="PANTHER" id="PTHR46987:SF5">
    <property type="entry name" value="R-SPONDIN-1"/>
    <property type="match status" value="1"/>
</dbReference>
<dbReference type="Pfam" id="PF15913">
    <property type="entry name" value="Furin-like_2"/>
    <property type="match status" value="1"/>
</dbReference>
<dbReference type="SMART" id="SM00261">
    <property type="entry name" value="FU"/>
    <property type="match status" value="2"/>
</dbReference>
<dbReference type="SMART" id="SM00209">
    <property type="entry name" value="TSP1"/>
    <property type="match status" value="1"/>
</dbReference>
<dbReference type="SUPFAM" id="SSF57184">
    <property type="entry name" value="Growth factor receptor domain"/>
    <property type="match status" value="1"/>
</dbReference>
<dbReference type="SUPFAM" id="SSF82895">
    <property type="entry name" value="TSP-1 type 1 repeat"/>
    <property type="match status" value="1"/>
</dbReference>
<dbReference type="PROSITE" id="PS50092">
    <property type="entry name" value="TSP1"/>
    <property type="match status" value="1"/>
</dbReference>
<evidence type="ECO:0000250" key="1"/>
<evidence type="ECO:0000250" key="2">
    <source>
        <dbReference type="UniProtKB" id="Q9Z132"/>
    </source>
</evidence>
<evidence type="ECO:0000255" key="3"/>
<evidence type="ECO:0000255" key="4">
    <source>
        <dbReference type="PROSITE-ProRule" id="PRU00210"/>
    </source>
</evidence>
<evidence type="ECO:0000256" key="5">
    <source>
        <dbReference type="SAM" id="MobiDB-lite"/>
    </source>
</evidence>
<evidence type="ECO:0000269" key="6">
    <source>
    </source>
</evidence>
<evidence type="ECO:0000269" key="7">
    <source>
    </source>
</evidence>
<evidence type="ECO:0000269" key="8">
    <source>
    </source>
</evidence>
<evidence type="ECO:0000269" key="9">
    <source>
    </source>
</evidence>
<evidence type="ECO:0000269" key="10">
    <source>
    </source>
</evidence>
<evidence type="ECO:0000269" key="11">
    <source>
    </source>
</evidence>
<evidence type="ECO:0000269" key="12">
    <source>
    </source>
</evidence>
<evidence type="ECO:0000269" key="13">
    <source>
    </source>
</evidence>
<evidence type="ECO:0000269" key="14">
    <source>
    </source>
</evidence>
<evidence type="ECO:0000269" key="15">
    <source>
    </source>
</evidence>
<evidence type="ECO:0000269" key="16">
    <source>
    </source>
</evidence>
<evidence type="ECO:0000269" key="17">
    <source>
    </source>
</evidence>
<evidence type="ECO:0000269" key="18">
    <source>
    </source>
</evidence>
<evidence type="ECO:0000269" key="19">
    <source>
    </source>
</evidence>
<evidence type="ECO:0000303" key="20">
    <source>
    </source>
</evidence>
<evidence type="ECO:0000303" key="21">
    <source>
    </source>
</evidence>
<evidence type="ECO:0000305" key="22"/>
<evidence type="ECO:0007744" key="23">
    <source>
        <dbReference type="PDB" id="4BSO"/>
    </source>
</evidence>
<evidence type="ECO:0007744" key="24">
    <source>
        <dbReference type="PDB" id="4BSP"/>
    </source>
</evidence>
<evidence type="ECO:0007744" key="25">
    <source>
        <dbReference type="PDB" id="4BSR"/>
    </source>
</evidence>
<evidence type="ECO:0007744" key="26">
    <source>
        <dbReference type="PDB" id="4BSS"/>
    </source>
</evidence>
<evidence type="ECO:0007744" key="27">
    <source>
        <dbReference type="PDB" id="4BST"/>
    </source>
</evidence>
<evidence type="ECO:0007744" key="28">
    <source>
        <dbReference type="PDB" id="4BSU"/>
    </source>
</evidence>
<evidence type="ECO:0007829" key="29">
    <source>
        <dbReference type="PDB" id="4BSP"/>
    </source>
</evidence>
<evidence type="ECO:0007829" key="30">
    <source>
        <dbReference type="PDB" id="4BSS"/>
    </source>
</evidence>
<evidence type="ECO:0007829" key="31">
    <source>
        <dbReference type="PDB" id="4LI2"/>
    </source>
</evidence>
<gene>
    <name type="primary">RSPO1</name>
</gene>
<protein>
    <recommendedName>
        <fullName>R-spondin-1</fullName>
    </recommendedName>
    <alternativeName>
        <fullName>Roof plate-specific spondin-1</fullName>
        <shortName>hRspo1</shortName>
    </alternativeName>
</protein>
<name>RSPO1_HUMAN</name>
<reference key="1">
    <citation type="journal article" date="2005" name="Science">
        <title>Mitogenic influence of human R-spondin1 on the intestinal epithelium.</title>
        <authorList>
            <person name="Kim K.-A."/>
            <person name="Kakitani M."/>
            <person name="Zhao J."/>
            <person name="Oshima T."/>
            <person name="Tang T."/>
            <person name="Binnerts M."/>
            <person name="Liu Y."/>
            <person name="Boyle B."/>
            <person name="Park E."/>
            <person name="Emtage P."/>
            <person name="Funk W.D."/>
            <person name="Tomizuka K."/>
        </authorList>
    </citation>
    <scope>NUCLEOTIDE SEQUENCE [MRNA] (ISOFORM 1)</scope>
    <scope>FUNCTION</scope>
</reference>
<reference key="2">
    <citation type="journal article" date="2006" name="Nat. Genet.">
        <title>R-spondin1 is essential in sex determination, skin differentiation and malignancy.</title>
        <authorList>
            <person name="Parma P."/>
            <person name="Radi O."/>
            <person name="Vidal V."/>
            <person name="Chaboissier M.C."/>
            <person name="Dellambra E."/>
            <person name="Valentini S."/>
            <person name="Guerra L."/>
            <person name="Schedl A."/>
            <person name="Camerino G."/>
        </authorList>
    </citation>
    <scope>NUCLEOTIDE SEQUENCE [MRNA] (ISOFORMS 1 AND 3)</scope>
    <scope>TISSUE SPECIFICITY</scope>
    <scope>INVOLVEMENT IN PALMOPLANTAR HYPERKERATOSIS WITH SQUAMOUS CELL CARCINOMA OF SKIN AND SEX REVERSAL</scope>
</reference>
<reference key="3">
    <citation type="journal article" date="2004" name="Nat. Genet.">
        <title>Complete sequencing and characterization of 21,243 full-length human cDNAs.</title>
        <authorList>
            <person name="Ota T."/>
            <person name="Suzuki Y."/>
            <person name="Nishikawa T."/>
            <person name="Otsuki T."/>
            <person name="Sugiyama T."/>
            <person name="Irie R."/>
            <person name="Wakamatsu A."/>
            <person name="Hayashi K."/>
            <person name="Sato H."/>
            <person name="Nagai K."/>
            <person name="Kimura K."/>
            <person name="Makita H."/>
            <person name="Sekine M."/>
            <person name="Obayashi M."/>
            <person name="Nishi T."/>
            <person name="Shibahara T."/>
            <person name="Tanaka T."/>
            <person name="Ishii S."/>
            <person name="Yamamoto J."/>
            <person name="Saito K."/>
            <person name="Kawai Y."/>
            <person name="Isono Y."/>
            <person name="Nakamura Y."/>
            <person name="Nagahari K."/>
            <person name="Murakami K."/>
            <person name="Yasuda T."/>
            <person name="Iwayanagi T."/>
            <person name="Wagatsuma M."/>
            <person name="Shiratori A."/>
            <person name="Sudo H."/>
            <person name="Hosoiri T."/>
            <person name="Kaku Y."/>
            <person name="Kodaira H."/>
            <person name="Kondo H."/>
            <person name="Sugawara M."/>
            <person name="Takahashi M."/>
            <person name="Kanda K."/>
            <person name="Yokoi T."/>
            <person name="Furuya T."/>
            <person name="Kikkawa E."/>
            <person name="Omura Y."/>
            <person name="Abe K."/>
            <person name="Kamihara K."/>
            <person name="Katsuta N."/>
            <person name="Sato K."/>
            <person name="Tanikawa M."/>
            <person name="Yamazaki M."/>
            <person name="Ninomiya K."/>
            <person name="Ishibashi T."/>
            <person name="Yamashita H."/>
            <person name="Murakawa K."/>
            <person name="Fujimori K."/>
            <person name="Tanai H."/>
            <person name="Kimata M."/>
            <person name="Watanabe M."/>
            <person name="Hiraoka S."/>
            <person name="Chiba Y."/>
            <person name="Ishida S."/>
            <person name="Ono Y."/>
            <person name="Takiguchi S."/>
            <person name="Watanabe S."/>
            <person name="Yosida M."/>
            <person name="Hotuta T."/>
            <person name="Kusano J."/>
            <person name="Kanehori K."/>
            <person name="Takahashi-Fujii A."/>
            <person name="Hara H."/>
            <person name="Tanase T.-O."/>
            <person name="Nomura Y."/>
            <person name="Togiya S."/>
            <person name="Komai F."/>
            <person name="Hara R."/>
            <person name="Takeuchi K."/>
            <person name="Arita M."/>
            <person name="Imose N."/>
            <person name="Musashino K."/>
            <person name="Yuuki H."/>
            <person name="Oshima A."/>
            <person name="Sasaki N."/>
            <person name="Aotsuka S."/>
            <person name="Yoshikawa Y."/>
            <person name="Matsunawa H."/>
            <person name="Ichihara T."/>
            <person name="Shiohata N."/>
            <person name="Sano S."/>
            <person name="Moriya S."/>
            <person name="Momiyama H."/>
            <person name="Satoh N."/>
            <person name="Takami S."/>
            <person name="Terashima Y."/>
            <person name="Suzuki O."/>
            <person name="Nakagawa S."/>
            <person name="Senoh A."/>
            <person name="Mizoguchi H."/>
            <person name="Goto Y."/>
            <person name="Shimizu F."/>
            <person name="Wakebe H."/>
            <person name="Hishigaki H."/>
            <person name="Watanabe T."/>
            <person name="Sugiyama A."/>
            <person name="Takemoto M."/>
            <person name="Kawakami B."/>
            <person name="Yamazaki M."/>
            <person name="Watanabe K."/>
            <person name="Kumagai A."/>
            <person name="Itakura S."/>
            <person name="Fukuzumi Y."/>
            <person name="Fujimori Y."/>
            <person name="Komiyama M."/>
            <person name="Tashiro H."/>
            <person name="Tanigami A."/>
            <person name="Fujiwara T."/>
            <person name="Ono T."/>
            <person name="Yamada K."/>
            <person name="Fujii Y."/>
            <person name="Ozaki K."/>
            <person name="Hirao M."/>
            <person name="Ohmori Y."/>
            <person name="Kawabata A."/>
            <person name="Hikiji T."/>
            <person name="Kobatake N."/>
            <person name="Inagaki H."/>
            <person name="Ikema Y."/>
            <person name="Okamoto S."/>
            <person name="Okitani R."/>
            <person name="Kawakami T."/>
            <person name="Noguchi S."/>
            <person name="Itoh T."/>
            <person name="Shigeta K."/>
            <person name="Senba T."/>
            <person name="Matsumura K."/>
            <person name="Nakajima Y."/>
            <person name="Mizuno T."/>
            <person name="Morinaga M."/>
            <person name="Sasaki M."/>
            <person name="Togashi T."/>
            <person name="Oyama M."/>
            <person name="Hata H."/>
            <person name="Watanabe M."/>
            <person name="Komatsu T."/>
            <person name="Mizushima-Sugano J."/>
            <person name="Satoh T."/>
            <person name="Shirai Y."/>
            <person name="Takahashi Y."/>
            <person name="Nakagawa K."/>
            <person name="Okumura K."/>
            <person name="Nagase T."/>
            <person name="Nomura N."/>
            <person name="Kikuchi H."/>
            <person name="Masuho Y."/>
            <person name="Yamashita R."/>
            <person name="Nakai K."/>
            <person name="Yada T."/>
            <person name="Nakamura Y."/>
            <person name="Ohara O."/>
            <person name="Isogai T."/>
            <person name="Sugano S."/>
        </authorList>
    </citation>
    <scope>NUCLEOTIDE SEQUENCE [LARGE SCALE MRNA] (ISOFORM 2)</scope>
    <source>
        <tissue>Uterus</tissue>
    </source>
</reference>
<reference key="4">
    <citation type="journal article" date="2006" name="Nature">
        <title>The DNA sequence and biological annotation of human chromosome 1.</title>
        <authorList>
            <person name="Gregory S.G."/>
            <person name="Barlow K.F."/>
            <person name="McLay K.E."/>
            <person name="Kaul R."/>
            <person name="Swarbreck D."/>
            <person name="Dunham A."/>
            <person name="Scott C.E."/>
            <person name="Howe K.L."/>
            <person name="Woodfine K."/>
            <person name="Spencer C.C.A."/>
            <person name="Jones M.C."/>
            <person name="Gillson C."/>
            <person name="Searle S."/>
            <person name="Zhou Y."/>
            <person name="Kokocinski F."/>
            <person name="McDonald L."/>
            <person name="Evans R."/>
            <person name="Phillips K."/>
            <person name="Atkinson A."/>
            <person name="Cooper R."/>
            <person name="Jones C."/>
            <person name="Hall R.E."/>
            <person name="Andrews T.D."/>
            <person name="Lloyd C."/>
            <person name="Ainscough R."/>
            <person name="Almeida J.P."/>
            <person name="Ambrose K.D."/>
            <person name="Anderson F."/>
            <person name="Andrew R.W."/>
            <person name="Ashwell R.I.S."/>
            <person name="Aubin K."/>
            <person name="Babbage A.K."/>
            <person name="Bagguley C.L."/>
            <person name="Bailey J."/>
            <person name="Beasley H."/>
            <person name="Bethel G."/>
            <person name="Bird C.P."/>
            <person name="Bray-Allen S."/>
            <person name="Brown J.Y."/>
            <person name="Brown A.J."/>
            <person name="Buckley D."/>
            <person name="Burton J."/>
            <person name="Bye J."/>
            <person name="Carder C."/>
            <person name="Chapman J.C."/>
            <person name="Clark S.Y."/>
            <person name="Clarke G."/>
            <person name="Clee C."/>
            <person name="Cobley V."/>
            <person name="Collier R.E."/>
            <person name="Corby N."/>
            <person name="Coville G.J."/>
            <person name="Davies J."/>
            <person name="Deadman R."/>
            <person name="Dunn M."/>
            <person name="Earthrowl M."/>
            <person name="Ellington A.G."/>
            <person name="Errington H."/>
            <person name="Frankish A."/>
            <person name="Frankland J."/>
            <person name="French L."/>
            <person name="Garner P."/>
            <person name="Garnett J."/>
            <person name="Gay L."/>
            <person name="Ghori M.R.J."/>
            <person name="Gibson R."/>
            <person name="Gilby L.M."/>
            <person name="Gillett W."/>
            <person name="Glithero R.J."/>
            <person name="Grafham D.V."/>
            <person name="Griffiths C."/>
            <person name="Griffiths-Jones S."/>
            <person name="Grocock R."/>
            <person name="Hammond S."/>
            <person name="Harrison E.S.I."/>
            <person name="Hart E."/>
            <person name="Haugen E."/>
            <person name="Heath P.D."/>
            <person name="Holmes S."/>
            <person name="Holt K."/>
            <person name="Howden P.J."/>
            <person name="Hunt A.R."/>
            <person name="Hunt S.E."/>
            <person name="Hunter G."/>
            <person name="Isherwood J."/>
            <person name="James R."/>
            <person name="Johnson C."/>
            <person name="Johnson D."/>
            <person name="Joy A."/>
            <person name="Kay M."/>
            <person name="Kershaw J.K."/>
            <person name="Kibukawa M."/>
            <person name="Kimberley A.M."/>
            <person name="King A."/>
            <person name="Knights A.J."/>
            <person name="Lad H."/>
            <person name="Laird G."/>
            <person name="Lawlor S."/>
            <person name="Leongamornlert D.A."/>
            <person name="Lloyd D.M."/>
            <person name="Loveland J."/>
            <person name="Lovell J."/>
            <person name="Lush M.J."/>
            <person name="Lyne R."/>
            <person name="Martin S."/>
            <person name="Mashreghi-Mohammadi M."/>
            <person name="Matthews L."/>
            <person name="Matthews N.S.W."/>
            <person name="McLaren S."/>
            <person name="Milne S."/>
            <person name="Mistry S."/>
            <person name="Moore M.J.F."/>
            <person name="Nickerson T."/>
            <person name="O'Dell C.N."/>
            <person name="Oliver K."/>
            <person name="Palmeiri A."/>
            <person name="Palmer S.A."/>
            <person name="Parker A."/>
            <person name="Patel D."/>
            <person name="Pearce A.V."/>
            <person name="Peck A.I."/>
            <person name="Pelan S."/>
            <person name="Phelps K."/>
            <person name="Phillimore B.J."/>
            <person name="Plumb R."/>
            <person name="Rajan J."/>
            <person name="Raymond C."/>
            <person name="Rouse G."/>
            <person name="Saenphimmachak C."/>
            <person name="Sehra H.K."/>
            <person name="Sheridan E."/>
            <person name="Shownkeen R."/>
            <person name="Sims S."/>
            <person name="Skuce C.D."/>
            <person name="Smith M."/>
            <person name="Steward C."/>
            <person name="Subramanian S."/>
            <person name="Sycamore N."/>
            <person name="Tracey A."/>
            <person name="Tromans A."/>
            <person name="Van Helmond Z."/>
            <person name="Wall M."/>
            <person name="Wallis J.M."/>
            <person name="White S."/>
            <person name="Whitehead S.L."/>
            <person name="Wilkinson J.E."/>
            <person name="Willey D.L."/>
            <person name="Williams H."/>
            <person name="Wilming L."/>
            <person name="Wray P.W."/>
            <person name="Wu Z."/>
            <person name="Coulson A."/>
            <person name="Vaudin M."/>
            <person name="Sulston J.E."/>
            <person name="Durbin R.M."/>
            <person name="Hubbard T."/>
            <person name="Wooster R."/>
            <person name="Dunham I."/>
            <person name="Carter N.P."/>
            <person name="McVean G."/>
            <person name="Ross M.T."/>
            <person name="Harrow J."/>
            <person name="Olson M.V."/>
            <person name="Beck S."/>
            <person name="Rogers J."/>
            <person name="Bentley D.R."/>
        </authorList>
    </citation>
    <scope>NUCLEOTIDE SEQUENCE [LARGE SCALE GENOMIC DNA]</scope>
</reference>
<reference key="5">
    <citation type="journal article" date="2004" name="Genome Res.">
        <title>The status, quality, and expansion of the NIH full-length cDNA project: the Mammalian Gene Collection (MGC).</title>
        <authorList>
            <consortium name="The MGC Project Team"/>
        </authorList>
    </citation>
    <scope>NUCLEOTIDE SEQUENCE [LARGE SCALE MRNA] (ISOFORM 1)</scope>
</reference>
<reference key="6">
    <citation type="journal article" date="2007" name="Proc. Natl. Acad. Sci. U.S.A.">
        <title>R-Spondin1 regulates Wnt signaling by inhibiting internalization of LRP6.</title>
        <authorList>
            <person name="Binnerts M.E."/>
            <person name="Kim K.A."/>
            <person name="Bright J.M."/>
            <person name="Patel S.M."/>
            <person name="Tran K."/>
            <person name="Zhou M."/>
            <person name="Leung J.M."/>
            <person name="Liu Y."/>
            <person name="Lomas W.E. III"/>
            <person name="Dixon M."/>
            <person name="Hazell S.A."/>
            <person name="Wagle M."/>
            <person name="Nie W.S."/>
            <person name="Tomasevic N."/>
            <person name="Williams J."/>
            <person name="Zhan X."/>
            <person name="Levy M.D."/>
            <person name="Funk W.D."/>
            <person name="Abo A."/>
        </authorList>
    </citation>
    <scope>FUNCTION</scope>
    <scope>INTERACTION WITH KREM1</scope>
</reference>
<reference key="7">
    <citation type="journal article" date="2012" name="Nature">
        <title>ZNRF3 promotes Wnt receptor turnover in an R-spondin-sensitive manner.</title>
        <authorList>
            <person name="Hao H.X."/>
            <person name="Xie Y."/>
            <person name="Zhang Y."/>
            <person name="Charlat O."/>
            <person name="Oster E."/>
            <person name="Avello M."/>
            <person name="Lei H."/>
            <person name="Mickanin C."/>
            <person name="Liu D."/>
            <person name="Ruffner H."/>
            <person name="Mao X."/>
            <person name="Ma Q."/>
            <person name="Zamponi R."/>
            <person name="Bouwmeester T."/>
            <person name="Finan P.M."/>
            <person name="Kirschner M.W."/>
            <person name="Porter J.A."/>
            <person name="Serluca F.C."/>
            <person name="Cong F."/>
        </authorList>
    </citation>
    <scope>FUNCTION</scope>
    <scope>INTERACTION WITH ZNRF3</scope>
</reference>
<reference key="8">
    <citation type="journal article" date="2011" name="EMBO Rep.">
        <title>LGR4 and LGR5 are R-spondin receptors mediating Wnt/beta-catenin and Wnt/PCP signalling.</title>
        <authorList>
            <person name="Glinka A."/>
            <person name="Dolde C."/>
            <person name="Kirsch N."/>
            <person name="Huang Y.L."/>
            <person name="Kazanskaya O."/>
            <person name="Ingelfinger D."/>
            <person name="Boutros M."/>
            <person name="Cruciat C.M."/>
            <person name="Niehrs C."/>
        </authorList>
    </citation>
    <scope>FUNCTION</scope>
    <scope>INTERACTION WITH LGR4 AND LGR5</scope>
</reference>
<reference key="9">
    <citation type="journal article" date="2011" name="Nature">
        <title>Lgr5 homologues associate with Wnt receptors and mediate R-spondin signalling.</title>
        <authorList>
            <person name="de Lau W."/>
            <person name="Barker N."/>
            <person name="Low T.Y."/>
            <person name="Koo B.K."/>
            <person name="Li V.S."/>
            <person name="Teunissen H."/>
            <person name="Kujala P."/>
            <person name="Haegebarth A."/>
            <person name="Peters P.J."/>
            <person name="van de Wetering M."/>
            <person name="Stange D.E."/>
            <person name="van Es J.E."/>
            <person name="Guardavaccaro D."/>
            <person name="Schasfoort R.B."/>
            <person name="Mohri Y."/>
            <person name="Nishimori K."/>
            <person name="Mohammed S."/>
            <person name="Heck A.J."/>
            <person name="Clevers H."/>
        </authorList>
    </citation>
    <scope>FUNCTION</scope>
    <scope>INTERACTION WITH LGR4; LGR5 AND LGR6</scope>
</reference>
<reference key="10">
    <citation type="journal article" date="2012" name="PLoS ONE">
        <title>LGR6 is a high affinity receptor of R-spondins and potentially functions as a tumor suppressor.</title>
        <authorList>
            <person name="Gong X."/>
            <person name="Carmon K.S."/>
            <person name="Lin Q."/>
            <person name="Thomas A."/>
            <person name="Yi J."/>
            <person name="Liu Q."/>
        </authorList>
    </citation>
    <scope>FUNCTION</scope>
    <scope>INTERACTION WITH LGR6</scope>
</reference>
<reference key="11">
    <citation type="journal article" date="2012" name="PLoS ONE">
        <title>R-Spondin potentiates Wnt/beta-catenin signaling through orphan receptors LGR4 and LGR5.</title>
        <authorList>
            <person name="Ruffner H."/>
            <person name="Sprunger J."/>
            <person name="Charlat O."/>
            <person name="Leighton-Davies J."/>
            <person name="Grosshans B."/>
            <person name="Salathe A."/>
            <person name="Zietzling S."/>
            <person name="Beck V."/>
            <person name="Therier M."/>
            <person name="Isken A."/>
            <person name="Xie Y."/>
            <person name="Zhang Y."/>
            <person name="Hao H."/>
            <person name="Shi X."/>
            <person name="Liu D."/>
            <person name="Song Q."/>
            <person name="Clay I."/>
            <person name="Hintzen G."/>
            <person name="Tchorz J."/>
            <person name="Bouchez L.C."/>
            <person name="Michaud G."/>
            <person name="Finan P."/>
            <person name="Myer V.E."/>
            <person name="Bouwmeester T."/>
            <person name="Porter J."/>
            <person name="Hild M."/>
            <person name="Bassilana F."/>
            <person name="Parker C.N."/>
            <person name="Cong F."/>
        </authorList>
    </citation>
    <scope>FUNCTION</scope>
    <scope>INTERACTION WITH LGR4 AND LGR5</scope>
</reference>
<reference key="12">
    <citation type="journal article" date="2016" name="Oncol. Lett.">
        <title>N-glycosylation of R-spondin1 at Asn137 negatively regulates its secretion and Wnt/beta-catenin signaling-enhancing activity.</title>
        <authorList>
            <person name="Tsuchiya M."/>
            <person name="Niwa Y."/>
            <person name="Simizu S."/>
        </authorList>
    </citation>
    <scope>GLYCOSYLATION AT ASN-137</scope>
    <scope>MUTAGENESIS OF ASN-137</scope>
</reference>
<reference key="13">
    <citation type="journal article" date="2016" name="Mol. Biol. Cell">
        <title>Identification of DPY19L3 as the C-mannosyltransferase of R-spondin1 in human cells.</title>
        <authorList>
            <person name="Niwa Y."/>
            <person name="Suzuki T."/>
            <person name="Dohmae N."/>
            <person name="Simizu S."/>
        </authorList>
    </citation>
    <scope>GLYCOSYLATION AT TRP-153 AND TRP-156</scope>
    <scope>SUBCELLULAR LOCATION</scope>
    <scope>MUTAGENESIS OF TRP-153 AND TRP-156</scope>
    <scope>MASS SPECTROMETRY</scope>
</reference>
<reference key="14">
    <citation type="journal article" date="2018" name="Nature">
        <title>RSPO2 inhibition of RNF43 and ZNRF3 governs limb development independently of LGR4/5/6.</title>
        <authorList>
            <person name="Szenker-Ravi E."/>
            <person name="Altunoglu U."/>
            <person name="Leushacke M."/>
            <person name="Bosso-Lefevre C."/>
            <person name="Khatoo M."/>
            <person name="Thi Tran H."/>
            <person name="Naert T."/>
            <person name="Noelanders R."/>
            <person name="Hajamohideen A."/>
            <person name="Beneteau C."/>
            <person name="de Sousa S.B."/>
            <person name="Karaman B."/>
            <person name="Latypova X."/>
            <person name="Basaran S."/>
            <person name="Yuecel E.B."/>
            <person name="Tan T.T."/>
            <person name="Vlaminck L."/>
            <person name="Nayak S.S."/>
            <person name="Shukla A."/>
            <person name="Girisha K.M."/>
            <person name="Le Caignec C."/>
            <person name="Soshnikova N."/>
            <person name="Uyguner Z.O."/>
            <person name="Vleminckx K."/>
            <person name="Barker N."/>
            <person name="Kayserili H."/>
            <person name="Reversade B."/>
        </authorList>
    </citation>
    <scope>FUNCTION</scope>
</reference>
<reference key="15">
    <citation type="journal article" date="2013" name="Cell Rep.">
        <title>Structure of stem cell growth factor R-spondin 1 in complex with the ectodomain of its receptor LGR5.</title>
        <authorList>
            <person name="Peng W.C."/>
            <person name="de Lau W."/>
            <person name="Forneris F."/>
            <person name="Granneman J.C."/>
            <person name="Huch M."/>
            <person name="Clevers H."/>
            <person name="Gros P."/>
        </authorList>
    </citation>
    <scope>X-RAY CRYSTALLOGRAPHY (2.0 ANGSTROMS) OF 31-146 IN COMPLEX WITH LGR5</scope>
    <scope>FUNCTION</scope>
    <scope>INTERACTION WITH LGR5</scope>
    <scope>MUTAGENESIS OF ARG-66; ARG-70; GLN-71; GLY-73; ARG-87; PHE-106 AND PHE-110</scope>
    <scope>DISULFIDE BONDS</scope>
</reference>
<reference key="16">
    <citation type="journal article" date="2013" name="Genes Dev.">
        <title>Structural basis for R-spondin recognition by LGR4/5/6 receptors.</title>
        <authorList>
            <person name="Wang D."/>
            <person name="Huang B."/>
            <person name="Zhang S."/>
            <person name="Yu X."/>
            <person name="Wu W."/>
            <person name="Wang X."/>
        </authorList>
    </citation>
    <scope>X-RAY CRYSTALLOGRAPHY (2.5 ANGSTROMS) OF 39-128 IN COMPLEX WITH LGR4</scope>
    <scope>FUNCTION</scope>
    <scope>SUBUNIT</scope>
    <scope>MUTAGENESIS OF ARG-87; PHE-106; PHE-110; LYS-122 AND ARG-124</scope>
    <scope>DISULFIDE BONDS</scope>
</reference>
<reference key="17">
    <citation type="journal article" date="2013" name="Genes Dev.">
        <title>The structural basis of R-spondin recognition by LGR5 and RNF43.</title>
        <authorList>
            <person name="Chen P.H."/>
            <person name="Chen X."/>
            <person name="Lin Z."/>
            <person name="Fang D."/>
            <person name="He X."/>
        </authorList>
    </citation>
    <scope>X-RAY CRYSTALLOGRAPHY (2.5 ANGSTROMS) OF 35-144 IN COMPLEX WITH LGR5 AND RNF43</scope>
    <scope>SUBUNIT</scope>
    <scope>DISULFIDE BONDS</scope>
</reference>
<proteinExistence type="evidence at protein level"/>
<feature type="signal peptide" evidence="3">
    <location>
        <begin position="1"/>
        <end position="20"/>
    </location>
</feature>
<feature type="chain" id="PRO_0000234436" description="R-spondin-1">
    <location>
        <begin position="21"/>
        <end position="263"/>
    </location>
</feature>
<feature type="repeat" description="FU 1">
    <location>
        <begin position="34"/>
        <end position="85"/>
    </location>
</feature>
<feature type="repeat" description="FU 2">
    <location>
        <begin position="91"/>
        <end position="135"/>
    </location>
</feature>
<feature type="domain" description="TSP type-1" evidence="4">
    <location>
        <begin position="147"/>
        <end position="207"/>
    </location>
</feature>
<feature type="region of interest" description="Disordered" evidence="5">
    <location>
        <begin position="206"/>
        <end position="263"/>
    </location>
</feature>
<feature type="compositionally biased region" description="Basic and acidic residues" evidence="5">
    <location>
        <begin position="218"/>
        <end position="234"/>
    </location>
</feature>
<feature type="glycosylation site" description="N-linked (GlcNAc...) asparagine" evidence="18">
    <location>
        <position position="137"/>
    </location>
</feature>
<feature type="glycosylation site" description="C-linked (Man) tryptophan" evidence="17">
    <location>
        <position position="153"/>
    </location>
</feature>
<feature type="glycosylation site" description="C-linked (Man) tryptophan" evidence="17">
    <location>
        <position position="156"/>
    </location>
</feature>
<feature type="disulfide bond" evidence="16 23 24 25 26 27 28">
    <location>
        <begin position="40"/>
        <end position="47"/>
    </location>
</feature>
<feature type="disulfide bond" evidence="16 23 24 25 26 27 28">
    <location>
        <begin position="44"/>
        <end position="53"/>
    </location>
</feature>
<feature type="disulfide bond" evidence="16 23 24 25 26 27 28">
    <location>
        <begin position="56"/>
        <end position="75"/>
    </location>
</feature>
<feature type="disulfide bond" evidence="16 23 24 25 26 27 28">
    <location>
        <begin position="79"/>
        <end position="94"/>
    </location>
</feature>
<feature type="disulfide bond" evidence="16 23 24 25 26 27 28">
    <location>
        <begin position="97"/>
        <end position="105"/>
    </location>
</feature>
<feature type="disulfide bond" evidence="16 23 24 25 26 27 28">
    <location>
        <begin position="102"/>
        <end position="111"/>
    </location>
</feature>
<feature type="disulfide bond" evidence="16 23 24 25 26 27 28">
    <location>
        <begin position="114"/>
        <end position="125"/>
    </location>
</feature>
<feature type="disulfide bond" evidence="16 23 24 25 26 27 28">
    <location>
        <begin position="129"/>
        <end position="142"/>
    </location>
</feature>
<feature type="disulfide bond" evidence="4">
    <location>
        <begin position="148"/>
        <end position="190"/>
    </location>
</feature>
<feature type="disulfide bond" evidence="4">
    <location>
        <begin position="159"/>
        <end position="166"/>
    </location>
</feature>
<feature type="disulfide bond" evidence="4">
    <location>
        <begin position="199"/>
        <end position="206"/>
    </location>
</feature>
<feature type="splice variant" id="VSP_018320" description="In isoform 2." evidence="20">
    <original>MRLGLCVVALVLSWTHLTISSRGIKGKRQRRI</original>
    <variation>MIFRV</variation>
    <location>
        <begin position="1"/>
        <end position="32"/>
    </location>
</feature>
<feature type="splice variant" id="VSP_043265" description="In isoform 3." evidence="21">
    <location>
        <begin position="146"/>
        <end position="208"/>
    </location>
</feature>
<feature type="mutagenesis site" description="Strongly reduces activation of Wnt signaling." evidence="16">
    <original>R</original>
    <variation>A</variation>
    <location>
        <position position="66"/>
    </location>
</feature>
<feature type="mutagenesis site" description="Reduces activation of Wnt signaling." evidence="16">
    <original>R</original>
    <variation>W</variation>
    <location>
        <position position="66"/>
    </location>
</feature>
<feature type="mutagenesis site" description="Strongly reduces activation of Wnt signaling." evidence="16">
    <original>R</original>
    <variation>C</variation>
    <variation>E</variation>
    <location>
        <position position="70"/>
    </location>
</feature>
<feature type="mutagenesis site" description="No effect on activation of Wnt signaling." evidence="16">
    <original>Q</original>
    <variation>E</variation>
    <location>
        <position position="71"/>
    </location>
</feature>
<feature type="mutagenesis site" description="Strongly reduces activation of Wnt signaling." evidence="16">
    <original>Q</original>
    <variation>R</variation>
    <location>
        <position position="71"/>
    </location>
</feature>
<feature type="mutagenesis site" description="Strongly reduces activation of Wnt signaling." evidence="16">
    <original>G</original>
    <variation>E</variation>
    <variation>R</variation>
    <location>
        <position position="73"/>
    </location>
</feature>
<feature type="mutagenesis site" description="Nearly abolishes activation of Wnt signaling." evidence="15 16">
    <original>R</original>
    <variation>A</variation>
    <location>
        <position position="87"/>
    </location>
</feature>
<feature type="mutagenesis site" description="Abolishes activation of Wnt signaling. Abolishes LGR4 binding." evidence="15 16">
    <original>F</original>
    <variation>A</variation>
    <location>
        <position position="106"/>
    </location>
</feature>
<feature type="mutagenesis site" description="Abolishes activation of Wnt signaling." evidence="15 16">
    <original>F</original>
    <variation>E</variation>
    <location>
        <position position="106"/>
    </location>
</feature>
<feature type="mutagenesis site" description="Nearly abolishes activation of Wnt signaling." evidence="15 16">
    <original>F</original>
    <variation>A</variation>
    <location>
        <position position="110"/>
    </location>
</feature>
<feature type="mutagenesis site" description="Abolishes activation of Wnt signaling." evidence="15 16">
    <original>F</original>
    <variation>E</variation>
    <location>
        <position position="110"/>
    </location>
</feature>
<feature type="mutagenesis site" description="Strongly reduces affinity for LGR4." evidence="15">
    <original>K</original>
    <variation>A</variation>
    <location>
        <position position="122"/>
    </location>
</feature>
<feature type="mutagenesis site" description="Strongly reduces affinity for LGR4." evidence="15">
    <original>R</original>
    <variation>A</variation>
    <location>
        <position position="124"/>
    </location>
</feature>
<feature type="mutagenesis site" description="Secretion of RSPO1 is decreased. Increased Wnt/beta-catenin signaling-enhancing effects." evidence="18">
    <original>N</original>
    <variation>Q</variation>
    <location>
        <position position="137"/>
    </location>
</feature>
<feature type="mutagenesis site" description="Secretion of RSPO1 is decreased; when associated with A-156. Decreases activation of Wnt signaling; when associated with A-156." evidence="17">
    <original>W</original>
    <variation>A</variation>
    <location>
        <position position="153"/>
    </location>
</feature>
<feature type="mutagenesis site" description="Secretion of RSPO1 is decreased; when associated with A-153. Decreases activation of Wnt signaling; when associated with A-153." evidence="17">
    <original>W</original>
    <variation>A</variation>
    <location>
        <position position="156"/>
    </location>
</feature>
<feature type="sequence conflict" description="In Ref. 3; BAC05263." evidence="22" ref="3">
    <original>M</original>
    <variation>V</variation>
    <location>
        <position position="150"/>
    </location>
</feature>
<feature type="strand" evidence="29">
    <location>
        <begin position="44"/>
        <end position="48"/>
    </location>
</feature>
<feature type="turn" evidence="29">
    <location>
        <begin position="49"/>
        <end position="51"/>
    </location>
</feature>
<feature type="strand" evidence="29">
    <location>
        <begin position="52"/>
        <end position="56"/>
    </location>
</feature>
<feature type="strand" evidence="29">
    <location>
        <begin position="60"/>
        <end position="67"/>
    </location>
</feature>
<feature type="strand" evidence="29">
    <location>
        <begin position="70"/>
        <end position="78"/>
    </location>
</feature>
<feature type="strand" evidence="29">
    <location>
        <begin position="83"/>
        <end position="87"/>
    </location>
</feature>
<feature type="strand" evidence="29">
    <location>
        <begin position="92"/>
        <end position="96"/>
    </location>
</feature>
<feature type="strand" evidence="29">
    <location>
        <begin position="102"/>
        <end position="107"/>
    </location>
</feature>
<feature type="strand" evidence="29">
    <location>
        <begin position="110"/>
        <end position="114"/>
    </location>
</feature>
<feature type="strand" evidence="29">
    <location>
        <begin position="119"/>
        <end position="121"/>
    </location>
</feature>
<feature type="strand" evidence="29">
    <location>
        <begin position="124"/>
        <end position="126"/>
    </location>
</feature>
<feature type="turn" evidence="30">
    <location>
        <begin position="131"/>
        <end position="134"/>
    </location>
</feature>
<feature type="strand" evidence="31">
    <location>
        <begin position="137"/>
        <end position="139"/>
    </location>
</feature>